<name>RS11_FRAAA</name>
<sequence length="134" mass="14338">MPPKTRAAGAKKVRRKEKKNVAHGHAHIKSTFNNTIVSITDPTGNVISWASAGHVGFKGSRKSTPFAAQMAAENAARKAQEHGMRKVDVFVKGPGSGRETAIRSLQAAGLEVGAIQDVTPTPHNGCRPPKRRRV</sequence>
<feature type="chain" id="PRO_0000294761" description="Small ribosomal subunit protein uS11">
    <location>
        <begin position="1"/>
        <end position="134"/>
    </location>
</feature>
<dbReference type="EMBL" id="CT573213">
    <property type="protein sequence ID" value="CAJ59772.1"/>
    <property type="molecule type" value="Genomic_DNA"/>
</dbReference>
<dbReference type="RefSeq" id="WP_009740503.1">
    <property type="nucleotide sequence ID" value="NC_008278.1"/>
</dbReference>
<dbReference type="SMR" id="Q0RRP5"/>
<dbReference type="STRING" id="326424.FRAAL1108"/>
<dbReference type="KEGG" id="fal:FRAAL1108"/>
<dbReference type="eggNOG" id="COG0100">
    <property type="taxonomic scope" value="Bacteria"/>
</dbReference>
<dbReference type="HOGENOM" id="CLU_072439_5_0_11"/>
<dbReference type="OrthoDB" id="9806415at2"/>
<dbReference type="Proteomes" id="UP000000657">
    <property type="component" value="Chromosome"/>
</dbReference>
<dbReference type="GO" id="GO:1990904">
    <property type="term" value="C:ribonucleoprotein complex"/>
    <property type="evidence" value="ECO:0007669"/>
    <property type="project" value="UniProtKB-KW"/>
</dbReference>
<dbReference type="GO" id="GO:0005840">
    <property type="term" value="C:ribosome"/>
    <property type="evidence" value="ECO:0007669"/>
    <property type="project" value="UniProtKB-KW"/>
</dbReference>
<dbReference type="GO" id="GO:0019843">
    <property type="term" value="F:rRNA binding"/>
    <property type="evidence" value="ECO:0007669"/>
    <property type="project" value="UniProtKB-UniRule"/>
</dbReference>
<dbReference type="GO" id="GO:0003735">
    <property type="term" value="F:structural constituent of ribosome"/>
    <property type="evidence" value="ECO:0007669"/>
    <property type="project" value="InterPro"/>
</dbReference>
<dbReference type="GO" id="GO:0006412">
    <property type="term" value="P:translation"/>
    <property type="evidence" value="ECO:0007669"/>
    <property type="project" value="UniProtKB-UniRule"/>
</dbReference>
<dbReference type="FunFam" id="3.30.420.80:FF:000001">
    <property type="entry name" value="30S ribosomal protein S11"/>
    <property type="match status" value="1"/>
</dbReference>
<dbReference type="Gene3D" id="3.30.420.80">
    <property type="entry name" value="Ribosomal protein S11"/>
    <property type="match status" value="1"/>
</dbReference>
<dbReference type="HAMAP" id="MF_01310">
    <property type="entry name" value="Ribosomal_uS11"/>
    <property type="match status" value="1"/>
</dbReference>
<dbReference type="InterPro" id="IPR001971">
    <property type="entry name" value="Ribosomal_uS11"/>
</dbReference>
<dbReference type="InterPro" id="IPR019981">
    <property type="entry name" value="Ribosomal_uS11_bac-type"/>
</dbReference>
<dbReference type="InterPro" id="IPR018102">
    <property type="entry name" value="Ribosomal_uS11_CS"/>
</dbReference>
<dbReference type="InterPro" id="IPR036967">
    <property type="entry name" value="Ribosomal_uS11_sf"/>
</dbReference>
<dbReference type="NCBIfam" id="NF003698">
    <property type="entry name" value="PRK05309.1"/>
    <property type="match status" value="1"/>
</dbReference>
<dbReference type="NCBIfam" id="TIGR03632">
    <property type="entry name" value="uS11_bact"/>
    <property type="match status" value="1"/>
</dbReference>
<dbReference type="PANTHER" id="PTHR11759">
    <property type="entry name" value="40S RIBOSOMAL PROTEIN S14/30S RIBOSOMAL PROTEIN S11"/>
    <property type="match status" value="1"/>
</dbReference>
<dbReference type="Pfam" id="PF00411">
    <property type="entry name" value="Ribosomal_S11"/>
    <property type="match status" value="1"/>
</dbReference>
<dbReference type="PIRSF" id="PIRSF002131">
    <property type="entry name" value="Ribosomal_S11"/>
    <property type="match status" value="1"/>
</dbReference>
<dbReference type="SUPFAM" id="SSF53137">
    <property type="entry name" value="Translational machinery components"/>
    <property type="match status" value="1"/>
</dbReference>
<dbReference type="PROSITE" id="PS00054">
    <property type="entry name" value="RIBOSOMAL_S11"/>
    <property type="match status" value="1"/>
</dbReference>
<gene>
    <name evidence="1" type="primary">rpsK</name>
    <name type="ordered locus">FRAAL1108</name>
</gene>
<keyword id="KW-1185">Reference proteome</keyword>
<keyword id="KW-0687">Ribonucleoprotein</keyword>
<keyword id="KW-0689">Ribosomal protein</keyword>
<keyword id="KW-0694">RNA-binding</keyword>
<keyword id="KW-0699">rRNA-binding</keyword>
<organism>
    <name type="scientific">Frankia alni (strain DSM 45986 / CECT 9034 / ACN14a)</name>
    <dbReference type="NCBI Taxonomy" id="326424"/>
    <lineage>
        <taxon>Bacteria</taxon>
        <taxon>Bacillati</taxon>
        <taxon>Actinomycetota</taxon>
        <taxon>Actinomycetes</taxon>
        <taxon>Frankiales</taxon>
        <taxon>Frankiaceae</taxon>
        <taxon>Frankia</taxon>
    </lineage>
</organism>
<proteinExistence type="inferred from homology"/>
<reference key="1">
    <citation type="journal article" date="2007" name="Genome Res.">
        <title>Genome characteristics of facultatively symbiotic Frankia sp. strains reflect host range and host plant biogeography.</title>
        <authorList>
            <person name="Normand P."/>
            <person name="Lapierre P."/>
            <person name="Tisa L.S."/>
            <person name="Gogarten J.P."/>
            <person name="Alloisio N."/>
            <person name="Bagnarol E."/>
            <person name="Bassi C.A."/>
            <person name="Berry A.M."/>
            <person name="Bickhart D.M."/>
            <person name="Choisne N."/>
            <person name="Couloux A."/>
            <person name="Cournoyer B."/>
            <person name="Cruveiller S."/>
            <person name="Daubin V."/>
            <person name="Demange N."/>
            <person name="Francino M.P."/>
            <person name="Goltsman E."/>
            <person name="Huang Y."/>
            <person name="Kopp O.R."/>
            <person name="Labarre L."/>
            <person name="Lapidus A."/>
            <person name="Lavire C."/>
            <person name="Marechal J."/>
            <person name="Martinez M."/>
            <person name="Mastronunzio J.E."/>
            <person name="Mullin B.C."/>
            <person name="Niemann J."/>
            <person name="Pujic P."/>
            <person name="Rawnsley T."/>
            <person name="Rouy Z."/>
            <person name="Schenowitz C."/>
            <person name="Sellstedt A."/>
            <person name="Tavares F."/>
            <person name="Tomkins J.P."/>
            <person name="Vallenet D."/>
            <person name="Valverde C."/>
            <person name="Wall L.G."/>
            <person name="Wang Y."/>
            <person name="Medigue C."/>
            <person name="Benson D.R."/>
        </authorList>
    </citation>
    <scope>NUCLEOTIDE SEQUENCE [LARGE SCALE GENOMIC DNA]</scope>
    <source>
        <strain>DSM 45986 / CECT 9034 / ACN14a</strain>
    </source>
</reference>
<evidence type="ECO:0000255" key="1">
    <source>
        <dbReference type="HAMAP-Rule" id="MF_01310"/>
    </source>
</evidence>
<evidence type="ECO:0000305" key="2"/>
<comment type="function">
    <text evidence="1">Located on the platform of the 30S subunit, it bridges several disparate RNA helices of the 16S rRNA. Forms part of the Shine-Dalgarno cleft in the 70S ribosome.</text>
</comment>
<comment type="subunit">
    <text evidence="1">Part of the 30S ribosomal subunit. Interacts with proteins S7 and S18. Binds to IF-3.</text>
</comment>
<comment type="similarity">
    <text evidence="1">Belongs to the universal ribosomal protein uS11 family.</text>
</comment>
<protein>
    <recommendedName>
        <fullName evidence="1">Small ribosomal subunit protein uS11</fullName>
    </recommendedName>
    <alternativeName>
        <fullName evidence="2">30S ribosomal protein S11</fullName>
    </alternativeName>
</protein>
<accession>Q0RRP5</accession>